<evidence type="ECO:0000255" key="1"/>
<evidence type="ECO:0000256" key="2">
    <source>
        <dbReference type="SAM" id="MobiDB-lite"/>
    </source>
</evidence>
<evidence type="ECO:0000269" key="3">
    <source>
    </source>
</evidence>
<evidence type="ECO:0000269" key="4">
    <source>
    </source>
</evidence>
<evidence type="ECO:0000305" key="5"/>
<proteinExistence type="evidence at transcript level"/>
<organism>
    <name type="scientific">Schizosaccharomyces pombe (strain 972 / ATCC 24843)</name>
    <name type="common">Fission yeast</name>
    <dbReference type="NCBI Taxonomy" id="284812"/>
    <lineage>
        <taxon>Eukaryota</taxon>
        <taxon>Fungi</taxon>
        <taxon>Dikarya</taxon>
        <taxon>Ascomycota</taxon>
        <taxon>Taphrinomycotina</taxon>
        <taxon>Schizosaccharomycetes</taxon>
        <taxon>Schizosaccharomycetales</taxon>
        <taxon>Schizosaccharomycetaceae</taxon>
        <taxon>Schizosaccharomyces</taxon>
    </lineage>
</organism>
<protein>
    <recommendedName>
        <fullName>Sexual differentiation process protein isp4</fullName>
    </recommendedName>
</protein>
<keyword id="KW-0256">Endoplasmic reticulum</keyword>
<keyword id="KW-0472">Membrane</keyword>
<keyword id="KW-0571">Peptide transport</keyword>
<keyword id="KW-0653">Protein transport</keyword>
<keyword id="KW-1185">Reference proteome</keyword>
<keyword id="KW-0812">Transmembrane</keyword>
<keyword id="KW-1133">Transmembrane helix</keyword>
<keyword id="KW-0813">Transport</keyword>
<sequence length="785" mass="89192">MIGSINESPIEEHMNDSPSTKEKADSVDISDYIVSHSDDSLSKDIKKDTKSFLDVEHGEISTVDEFEEDSPYPEVRAAVPPTDDPSMPCNTIRMWTIGLIYSTVGAAVNMFFSLRNPTVTLSVLISELLAYPALQIWDLIFPDREFRIGRLKFNFKPGPFNVKEHALIVVMSSVSFGNAYSTDIILAQRVHYKQRFGFGYEICLTLATQLIGYGLAGLSRRLLVRPASMLWPVNLVQCTLIKTLHRKDLRNAVANGWRISPFRFFLYVFIASFIWNWFPSYIFQALSLFAWVTWIRPNSPTVNQIFGESTGISILPMTFDWNQISAYILSPLMAPADALMNILLGVILFFWIVTPALNFTNTWYGDYLPISSSGIIDHFGNSYNVTRILTKDATFDLDAYQNYSPIFMSTTYALAFGLSFASITSVIFHVILYHGKEIYDRLRDPPAPDIHEKLMKAYDEVPFYWYLSVFLAFFGMMMGTIYGWKTETPWWVIIVGVIFSAVWFIPIGIVQAITNIQLGLNVFTEFIVGYMYPGRPLAMMIFKTVGYITMTQGLAFAADLKFGHYMKLPPRIMFYTQMIATIWSCFVQIGVLDWALGNIDNVCQADQPDNYTCPNATVFFNSSVIWGVIGPKRMFSGKNTYTGLQYFWLAGVLGTILFWALWKKWPQKWWGQLNGPLIFGGTGYIPPATPVNYLAWSGIGLFFNYYLKKIFADWWQKYNFTLSAALDTGTQLSVIILFFCLQLPMVNFPDWWGNDGAFNTLDATGAAVRKLVNESAGEFFGPAEW</sequence>
<dbReference type="EMBL" id="D14061">
    <property type="protein sequence ID" value="BAA03147.1"/>
    <property type="molecule type" value="mRNA"/>
</dbReference>
<dbReference type="EMBL" id="D83992">
    <property type="protein sequence ID" value="BAA12193.1"/>
    <property type="status" value="ALT_FRAME"/>
    <property type="molecule type" value="Genomic_DNA"/>
</dbReference>
<dbReference type="EMBL" id="CU329671">
    <property type="protein sequence ID" value="CAC05511.1"/>
    <property type="molecule type" value="Genomic_DNA"/>
</dbReference>
<dbReference type="EMBL" id="AB027895">
    <property type="protein sequence ID" value="BAA87199.1"/>
    <property type="molecule type" value="Genomic_DNA"/>
</dbReference>
<dbReference type="PIR" id="S45495">
    <property type="entry name" value="S45495"/>
</dbReference>
<dbReference type="RefSeq" id="NP_595653.1">
    <property type="nucleotide sequence ID" value="NM_001021547.2"/>
</dbReference>
<dbReference type="BioGRID" id="276893">
    <property type="interactions" value="11"/>
</dbReference>
<dbReference type="FunCoup" id="P40900">
    <property type="interactions" value="9"/>
</dbReference>
<dbReference type="STRING" id="284812.P40900"/>
<dbReference type="TCDB" id="2.A.67.1.2">
    <property type="family name" value="the oligopeptide transporter (opt) family"/>
</dbReference>
<dbReference type="iPTMnet" id="P40900"/>
<dbReference type="PaxDb" id="4896-SPBC29B5.02c.1"/>
<dbReference type="EnsemblFungi" id="SPBC29B5.02c.1">
    <property type="protein sequence ID" value="SPBC29B5.02c.1:pep"/>
    <property type="gene ID" value="SPBC29B5.02c"/>
</dbReference>
<dbReference type="GeneID" id="2540364"/>
<dbReference type="KEGG" id="spo:2540364"/>
<dbReference type="PomBase" id="SPBC29B5.02c">
    <property type="gene designation" value="isp4"/>
</dbReference>
<dbReference type="VEuPathDB" id="FungiDB:SPBC29B5.02c"/>
<dbReference type="eggNOG" id="KOG2262">
    <property type="taxonomic scope" value="Eukaryota"/>
</dbReference>
<dbReference type="HOGENOM" id="CLU_004965_1_1_1"/>
<dbReference type="InParanoid" id="P40900"/>
<dbReference type="OMA" id="AMIWPAD"/>
<dbReference type="PhylomeDB" id="P40900"/>
<dbReference type="PRO" id="PR:P40900"/>
<dbReference type="Proteomes" id="UP000002485">
    <property type="component" value="Chromosome II"/>
</dbReference>
<dbReference type="GO" id="GO:0005789">
    <property type="term" value="C:endoplasmic reticulum membrane"/>
    <property type="evidence" value="ECO:0007669"/>
    <property type="project" value="UniProtKB-SubCell"/>
</dbReference>
<dbReference type="GO" id="GO:0005794">
    <property type="term" value="C:Golgi apparatus"/>
    <property type="evidence" value="ECO:0000314"/>
    <property type="project" value="PomBase"/>
</dbReference>
<dbReference type="GO" id="GO:0005886">
    <property type="term" value="C:plasma membrane"/>
    <property type="evidence" value="ECO:0000314"/>
    <property type="project" value="PomBase"/>
</dbReference>
<dbReference type="GO" id="GO:0035673">
    <property type="term" value="F:oligopeptide transmembrane transporter activity"/>
    <property type="evidence" value="ECO:0000318"/>
    <property type="project" value="GO_Central"/>
</dbReference>
<dbReference type="GO" id="GO:1901584">
    <property type="term" value="F:tetrapeptide transmembrane transporter activity"/>
    <property type="evidence" value="ECO:0000315"/>
    <property type="project" value="PomBase"/>
</dbReference>
<dbReference type="GO" id="GO:0015031">
    <property type="term" value="P:protein transport"/>
    <property type="evidence" value="ECO:0007669"/>
    <property type="project" value="UniProtKB-KW"/>
</dbReference>
<dbReference type="GO" id="GO:1901583">
    <property type="term" value="P:tetrapeptide import across plasma membrane"/>
    <property type="evidence" value="ECO:0000315"/>
    <property type="project" value="PomBase"/>
</dbReference>
<dbReference type="InterPro" id="IPR004648">
    <property type="entry name" value="Oligpept_transpt"/>
</dbReference>
<dbReference type="InterPro" id="IPR004813">
    <property type="entry name" value="OPT"/>
</dbReference>
<dbReference type="NCBIfam" id="TIGR00727">
    <property type="entry name" value="ISP4_OPT"/>
    <property type="match status" value="1"/>
</dbReference>
<dbReference type="NCBIfam" id="TIGR00728">
    <property type="entry name" value="OPT_sfam"/>
    <property type="match status" value="1"/>
</dbReference>
<dbReference type="PANTHER" id="PTHR22601">
    <property type="entry name" value="ISP4 LIKE PROTEIN"/>
    <property type="match status" value="1"/>
</dbReference>
<dbReference type="Pfam" id="PF03169">
    <property type="entry name" value="OPT"/>
    <property type="match status" value="1"/>
</dbReference>
<gene>
    <name type="primary">isp4</name>
    <name type="ORF">SPBC29B5.02c</name>
</gene>
<feature type="chain" id="PRO_0000213787" description="Sexual differentiation process protein isp4">
    <location>
        <begin position="1"/>
        <end position="785"/>
    </location>
</feature>
<feature type="transmembrane region" description="Helical" evidence="1">
    <location>
        <begin position="94"/>
        <end position="114"/>
    </location>
</feature>
<feature type="transmembrane region" description="Helical" evidence="1">
    <location>
        <begin position="121"/>
        <end position="141"/>
    </location>
</feature>
<feature type="transmembrane region" description="Helical" evidence="1">
    <location>
        <begin position="167"/>
        <end position="187"/>
    </location>
</feature>
<feature type="transmembrane region" description="Helical" evidence="1">
    <location>
        <begin position="196"/>
        <end position="216"/>
    </location>
</feature>
<feature type="transmembrane region" description="Helical" evidence="1">
    <location>
        <begin position="264"/>
        <end position="284"/>
    </location>
</feature>
<feature type="transmembrane region" description="Helical" evidence="1">
    <location>
        <begin position="339"/>
        <end position="359"/>
    </location>
</feature>
<feature type="transmembrane region" description="Helical" evidence="1">
    <location>
        <begin position="413"/>
        <end position="433"/>
    </location>
</feature>
<feature type="transmembrane region" description="Helical" evidence="1">
    <location>
        <begin position="461"/>
        <end position="481"/>
    </location>
</feature>
<feature type="transmembrane region" description="Helical" evidence="1">
    <location>
        <begin position="490"/>
        <end position="510"/>
    </location>
</feature>
<feature type="transmembrane region" description="Helical" evidence="1">
    <location>
        <begin position="512"/>
        <end position="532"/>
    </location>
</feature>
<feature type="transmembrane region" description="Helical" evidence="1">
    <location>
        <begin position="537"/>
        <end position="557"/>
    </location>
</feature>
<feature type="transmembrane region" description="Helical" evidence="1">
    <location>
        <begin position="572"/>
        <end position="592"/>
    </location>
</feature>
<feature type="transmembrane region" description="Helical" evidence="1">
    <location>
        <begin position="611"/>
        <end position="631"/>
    </location>
</feature>
<feature type="transmembrane region" description="Helical" evidence="1">
    <location>
        <begin position="642"/>
        <end position="662"/>
    </location>
</feature>
<feature type="transmembrane region" description="Helical" evidence="1">
    <location>
        <begin position="683"/>
        <end position="703"/>
    </location>
</feature>
<feature type="transmembrane region" description="Helical" evidence="1">
    <location>
        <begin position="732"/>
        <end position="752"/>
    </location>
</feature>
<feature type="region of interest" description="Disordered" evidence="2">
    <location>
        <begin position="1"/>
        <end position="28"/>
    </location>
</feature>
<feature type="compositionally biased region" description="Basic and acidic residues" evidence="2">
    <location>
        <begin position="10"/>
        <end position="26"/>
    </location>
</feature>
<feature type="sequence conflict" description="In Ref. 1; BAA03147." evidence="5" ref="1">
    <location>
        <position position="725"/>
    </location>
</feature>
<feature type="sequence conflict" description="In Ref. 1; BAA03147." evidence="5" ref="1">
    <original>GEFFGPAEW</original>
    <variation>R</variation>
    <location>
        <begin position="777"/>
        <end position="785"/>
    </location>
</feature>
<reference key="1">
    <citation type="journal article" date="1994" name="Curr. Genet.">
        <title>Identification and characterization of genes induced during sexual differentiation in Schizosaccharomyces pombe.</title>
        <authorList>
            <person name="Sato S."/>
            <person name="Suzuki H."/>
            <person name="Widyastuti U."/>
            <person name="Hotta Y."/>
            <person name="Tabata S."/>
        </authorList>
    </citation>
    <scope>NUCLEOTIDE SEQUENCE [MRNA]</scope>
</reference>
<reference key="2">
    <citation type="submission" date="1996-03" db="EMBL/GenBank/DDBJ databases">
        <title>S.pombe chromosome II cosmid 1228 sequence.</title>
        <authorList>
            <person name="Kohnosu A."/>
            <person name="Niwa O."/>
            <person name="Yano M."/>
            <person name="Saitoh S."/>
            <person name="Katayama T."/>
            <person name="Nagao K."/>
            <person name="Yanagida M."/>
        </authorList>
    </citation>
    <scope>NUCLEOTIDE SEQUENCE [GENOMIC DNA]</scope>
    <source>
        <strain>972 / ATCC 24843</strain>
    </source>
</reference>
<reference key="3">
    <citation type="journal article" date="2002" name="Nature">
        <title>The genome sequence of Schizosaccharomyces pombe.</title>
        <authorList>
            <person name="Wood V."/>
            <person name="Gwilliam R."/>
            <person name="Rajandream M.A."/>
            <person name="Lyne M.H."/>
            <person name="Lyne R."/>
            <person name="Stewart A."/>
            <person name="Sgouros J.G."/>
            <person name="Peat N."/>
            <person name="Hayles J."/>
            <person name="Baker S.G."/>
            <person name="Basham D."/>
            <person name="Bowman S."/>
            <person name="Brooks K."/>
            <person name="Brown D."/>
            <person name="Brown S."/>
            <person name="Chillingworth T."/>
            <person name="Churcher C.M."/>
            <person name="Collins M."/>
            <person name="Connor R."/>
            <person name="Cronin A."/>
            <person name="Davis P."/>
            <person name="Feltwell T."/>
            <person name="Fraser A."/>
            <person name="Gentles S."/>
            <person name="Goble A."/>
            <person name="Hamlin N."/>
            <person name="Harris D.E."/>
            <person name="Hidalgo J."/>
            <person name="Hodgson G."/>
            <person name="Holroyd S."/>
            <person name="Hornsby T."/>
            <person name="Howarth S."/>
            <person name="Huckle E.J."/>
            <person name="Hunt S."/>
            <person name="Jagels K."/>
            <person name="James K.D."/>
            <person name="Jones L."/>
            <person name="Jones M."/>
            <person name="Leather S."/>
            <person name="McDonald S."/>
            <person name="McLean J."/>
            <person name="Mooney P."/>
            <person name="Moule S."/>
            <person name="Mungall K.L."/>
            <person name="Murphy L.D."/>
            <person name="Niblett D."/>
            <person name="Odell C."/>
            <person name="Oliver K."/>
            <person name="O'Neil S."/>
            <person name="Pearson D."/>
            <person name="Quail M.A."/>
            <person name="Rabbinowitsch E."/>
            <person name="Rutherford K.M."/>
            <person name="Rutter S."/>
            <person name="Saunders D."/>
            <person name="Seeger K."/>
            <person name="Sharp S."/>
            <person name="Skelton J."/>
            <person name="Simmonds M.N."/>
            <person name="Squares R."/>
            <person name="Squares S."/>
            <person name="Stevens K."/>
            <person name="Taylor K."/>
            <person name="Taylor R.G."/>
            <person name="Tivey A."/>
            <person name="Walsh S.V."/>
            <person name="Warren T."/>
            <person name="Whitehead S."/>
            <person name="Woodward J.R."/>
            <person name="Volckaert G."/>
            <person name="Aert R."/>
            <person name="Robben J."/>
            <person name="Grymonprez B."/>
            <person name="Weltjens I."/>
            <person name="Vanstreels E."/>
            <person name="Rieger M."/>
            <person name="Schaefer M."/>
            <person name="Mueller-Auer S."/>
            <person name="Gabel C."/>
            <person name="Fuchs M."/>
            <person name="Duesterhoeft A."/>
            <person name="Fritzc C."/>
            <person name="Holzer E."/>
            <person name="Moestl D."/>
            <person name="Hilbert H."/>
            <person name="Borzym K."/>
            <person name="Langer I."/>
            <person name="Beck A."/>
            <person name="Lehrach H."/>
            <person name="Reinhardt R."/>
            <person name="Pohl T.M."/>
            <person name="Eger P."/>
            <person name="Zimmermann W."/>
            <person name="Wedler H."/>
            <person name="Wambutt R."/>
            <person name="Purnelle B."/>
            <person name="Goffeau A."/>
            <person name="Cadieu E."/>
            <person name="Dreano S."/>
            <person name="Gloux S."/>
            <person name="Lelaure V."/>
            <person name="Mottier S."/>
            <person name="Galibert F."/>
            <person name="Aves S.J."/>
            <person name="Xiang Z."/>
            <person name="Hunt C."/>
            <person name="Moore K."/>
            <person name="Hurst S.M."/>
            <person name="Lucas M."/>
            <person name="Rochet M."/>
            <person name="Gaillardin C."/>
            <person name="Tallada V.A."/>
            <person name="Garzon A."/>
            <person name="Thode G."/>
            <person name="Daga R.R."/>
            <person name="Cruzado L."/>
            <person name="Jimenez J."/>
            <person name="Sanchez M."/>
            <person name="del Rey F."/>
            <person name="Benito J."/>
            <person name="Dominguez A."/>
            <person name="Revuelta J.L."/>
            <person name="Moreno S."/>
            <person name="Armstrong J."/>
            <person name="Forsburg S.L."/>
            <person name="Cerutti L."/>
            <person name="Lowe T."/>
            <person name="McCombie W.R."/>
            <person name="Paulsen I."/>
            <person name="Potashkin J."/>
            <person name="Shpakovski G.V."/>
            <person name="Ussery D."/>
            <person name="Barrell B.G."/>
            <person name="Nurse P."/>
        </authorList>
    </citation>
    <scope>NUCLEOTIDE SEQUENCE [LARGE SCALE GENOMIC DNA]</scope>
    <source>
        <strain>972 / ATCC 24843</strain>
    </source>
</reference>
<reference key="4">
    <citation type="journal article" date="2000" name="Genes Cells">
        <title>Large-scale screening of intracellular protein localization in living fission yeast cells by the use of a GFP-fusion genomic DNA library.</title>
        <authorList>
            <person name="Ding D.-Q."/>
            <person name="Tomita Y."/>
            <person name="Yamamoto A."/>
            <person name="Chikashige Y."/>
            <person name="Haraguchi T."/>
            <person name="Hiraoka Y."/>
        </authorList>
    </citation>
    <scope>NUCLEOTIDE SEQUENCE [LARGE SCALE GENOMIC DNA] OF 1-143</scope>
    <scope>SUBCELLULAR LOCATION</scope>
    <source>
        <strain>ATCC 38364 / 968</strain>
    </source>
</reference>
<reference key="5">
    <citation type="journal article" date="2006" name="Nat. Biotechnol.">
        <title>ORFeome cloning and global analysis of protein localization in the fission yeast Schizosaccharomyces pombe.</title>
        <authorList>
            <person name="Matsuyama A."/>
            <person name="Arai R."/>
            <person name="Yashiroda Y."/>
            <person name="Shirai A."/>
            <person name="Kamata A."/>
            <person name="Sekido S."/>
            <person name="Kobayashi Y."/>
            <person name="Hashimoto A."/>
            <person name="Hamamoto M."/>
            <person name="Hiraoka Y."/>
            <person name="Horinouchi S."/>
            <person name="Yoshida M."/>
        </authorList>
    </citation>
    <scope>SUBCELLULAR LOCATION [LARGE SCALE ANALYSIS]</scope>
</reference>
<name>ISP4_SCHPO</name>
<accession>P40900</accession>
<accession>P78943</accession>
<accession>Q9HGP2</accession>
<accession>Q9UU01</accession>
<comment type="subcellular location">
    <subcellularLocation>
        <location evidence="3 4">Endoplasmic reticulum membrane</location>
        <topology evidence="3 4">Multi-pass membrane protein</topology>
    </subcellularLocation>
</comment>
<comment type="developmental stage">
    <text>Transcribed specifically during sexual development.</text>
</comment>
<comment type="similarity">
    <text evidence="5">Belongs to the oligopeptide OPT transporter family.</text>
</comment>
<comment type="sequence caution" evidence="5">
    <conflict type="frameshift">
        <sequence resource="EMBL-CDS" id="BAA12193"/>
    </conflict>
</comment>
<comment type="sequence caution" evidence="5">
    <conflict type="miscellaneous discrepancy">
        <sequence resource="EMBL-CDS" id="BAA12193"/>
    </conflict>
    <text>Sequencing errors.</text>
</comment>